<reference key="1">
    <citation type="journal article" date="2009" name="J. Bacteriol.">
        <title>Role of conjugative elements in the evolution of the multidrug-resistant pandemic clone Streptococcus pneumoniae Spain23F ST81.</title>
        <authorList>
            <person name="Croucher N.J."/>
            <person name="Walker D."/>
            <person name="Romero P."/>
            <person name="Lennard N."/>
            <person name="Paterson G.K."/>
            <person name="Bason N.C."/>
            <person name="Mitchell A.M."/>
            <person name="Quail M.A."/>
            <person name="Andrew P.W."/>
            <person name="Parkhill J."/>
            <person name="Bentley S.D."/>
            <person name="Mitchell T.J."/>
        </authorList>
    </citation>
    <scope>NUCLEOTIDE SEQUENCE [LARGE SCALE GENOMIC DNA]</scope>
    <source>
        <strain>ATCC 700669 / Spain 23F-1</strain>
    </source>
</reference>
<protein>
    <recommendedName>
        <fullName evidence="1">Probable DNA-directed RNA polymerase subunit delta</fullName>
    </recommendedName>
    <alternativeName>
        <fullName evidence="1">RNAP delta factor</fullName>
    </alternativeName>
</protein>
<proteinExistence type="inferred from homology"/>
<organism>
    <name type="scientific">Streptococcus pneumoniae (strain ATCC 700669 / Spain 23F-1)</name>
    <dbReference type="NCBI Taxonomy" id="561276"/>
    <lineage>
        <taxon>Bacteria</taxon>
        <taxon>Bacillati</taxon>
        <taxon>Bacillota</taxon>
        <taxon>Bacilli</taxon>
        <taxon>Lactobacillales</taxon>
        <taxon>Streptococcaceae</taxon>
        <taxon>Streptococcus</taxon>
    </lineage>
</organism>
<accession>B8ZLX1</accession>
<keyword id="KW-0240">DNA-directed RNA polymerase</keyword>
<keyword id="KW-0548">Nucleotidyltransferase</keyword>
<keyword id="KW-0804">Transcription</keyword>
<keyword id="KW-0808">Transferase</keyword>
<evidence type="ECO:0000255" key="1">
    <source>
        <dbReference type="HAMAP-Rule" id="MF_00357"/>
    </source>
</evidence>
<evidence type="ECO:0000255" key="2">
    <source>
        <dbReference type="PROSITE-ProRule" id="PRU01261"/>
    </source>
</evidence>
<evidence type="ECO:0000256" key="3">
    <source>
        <dbReference type="SAM" id="MobiDB-lite"/>
    </source>
</evidence>
<feature type="chain" id="PRO_1000133451" description="Probable DNA-directed RNA polymerase subunit delta">
    <location>
        <begin position="1"/>
        <end position="195"/>
    </location>
</feature>
<feature type="domain" description="HTH HARE-type" evidence="2">
    <location>
        <begin position="14"/>
        <end position="83"/>
    </location>
</feature>
<feature type="region of interest" description="Disordered" evidence="3">
    <location>
        <begin position="120"/>
        <end position="195"/>
    </location>
</feature>
<feature type="compositionally biased region" description="Acidic residues" evidence="3">
    <location>
        <begin position="120"/>
        <end position="138"/>
    </location>
</feature>
<feature type="compositionally biased region" description="Acidic residues" evidence="3">
    <location>
        <begin position="145"/>
        <end position="195"/>
    </location>
</feature>
<name>RPOE_STRPJ</name>
<dbReference type="EMBL" id="FM211187">
    <property type="protein sequence ID" value="CAR68295.1"/>
    <property type="molecule type" value="Genomic_DNA"/>
</dbReference>
<dbReference type="RefSeq" id="WP_000418402.1">
    <property type="nucleotide sequence ID" value="NC_011900.1"/>
</dbReference>
<dbReference type="SMR" id="B8ZLX1"/>
<dbReference type="GeneID" id="45652070"/>
<dbReference type="KEGG" id="sne:SPN23F04480"/>
<dbReference type="HOGENOM" id="CLU_116648_0_0_9"/>
<dbReference type="GO" id="GO:0000428">
    <property type="term" value="C:DNA-directed RNA polymerase complex"/>
    <property type="evidence" value="ECO:0007669"/>
    <property type="project" value="UniProtKB-KW"/>
</dbReference>
<dbReference type="GO" id="GO:0003899">
    <property type="term" value="F:DNA-directed RNA polymerase activity"/>
    <property type="evidence" value="ECO:0007669"/>
    <property type="project" value="UniProtKB-UniRule"/>
</dbReference>
<dbReference type="GO" id="GO:0006351">
    <property type="term" value="P:DNA-templated transcription"/>
    <property type="evidence" value="ECO:0007669"/>
    <property type="project" value="InterPro"/>
</dbReference>
<dbReference type="GO" id="GO:0006355">
    <property type="term" value="P:regulation of DNA-templated transcription"/>
    <property type="evidence" value="ECO:0007669"/>
    <property type="project" value="UniProtKB-UniRule"/>
</dbReference>
<dbReference type="Gene3D" id="1.10.10.1250">
    <property type="entry name" value="RNA polymerase, subunit delta, N-terminal domain"/>
    <property type="match status" value="1"/>
</dbReference>
<dbReference type="HAMAP" id="MF_00357">
    <property type="entry name" value="RNApol_bact_RpoE"/>
    <property type="match status" value="1"/>
</dbReference>
<dbReference type="InterPro" id="IPR007759">
    <property type="entry name" value="Asxl_HARE-HTH"/>
</dbReference>
<dbReference type="InterPro" id="IPR038087">
    <property type="entry name" value="RNAP_delta_N_dom_sf"/>
</dbReference>
<dbReference type="InterPro" id="IPR029757">
    <property type="entry name" value="RpoE"/>
</dbReference>
<dbReference type="NCBIfam" id="TIGR04567">
    <property type="entry name" value="RNAP_delt_lowGC"/>
    <property type="match status" value="1"/>
</dbReference>
<dbReference type="Pfam" id="PF05066">
    <property type="entry name" value="HARE-HTH"/>
    <property type="match status" value="1"/>
</dbReference>
<dbReference type="PROSITE" id="PS51913">
    <property type="entry name" value="HTH_HARE"/>
    <property type="match status" value="1"/>
</dbReference>
<sequence length="195" mass="22125">MELEVFAGQEKSELSMIEVARAILELRGRDHEMHFSDLVNEIQNYLGTSNSDIREALPLFYTELNFDGSFISLGDNKWGLRSWYGVDEIDEEIIALEENDDDEVAPKAKKKRVNAFMDGDSDAIDYNADDPEDEDAYEADPALSYDDENPDDEKNEVEAYDAEINEIAPDDLGEDVDLNEDDDEFSDDDAETSEE</sequence>
<comment type="function">
    <text evidence="1">Participates in both the initiation and recycling phases of transcription. In the presence of the delta subunit, RNAP displays an increased specificity of transcription, a decreased affinity for nucleic acids, and an increased efficiency of RNA synthesis because of enhanced recycling.</text>
</comment>
<comment type="subunit">
    <text evidence="1">RNAP is composed of a core of 2 alpha, a beta and a beta' subunits. The core is associated with a delta subunit and one of several sigma factors.</text>
</comment>
<comment type="similarity">
    <text evidence="1">Belongs to the RpoE family.</text>
</comment>
<gene>
    <name evidence="1" type="primary">rpoE</name>
    <name type="ordered locus">SPN23F04480</name>
</gene>